<keyword id="KW-1185">Reference proteome</keyword>
<keyword id="KW-0687">Ribonucleoprotein</keyword>
<keyword id="KW-0689">Ribosomal protein</keyword>
<organism>
    <name type="scientific">Arthrobacter sp. (strain FB24)</name>
    <dbReference type="NCBI Taxonomy" id="290399"/>
    <lineage>
        <taxon>Bacteria</taxon>
        <taxon>Bacillati</taxon>
        <taxon>Actinomycetota</taxon>
        <taxon>Actinomycetes</taxon>
        <taxon>Micrococcales</taxon>
        <taxon>Micrococcaceae</taxon>
        <taxon>Arthrobacter</taxon>
    </lineage>
</organism>
<comment type="function">
    <text evidence="1">This protein is located at the 30S-50S ribosomal subunit interface and may play a role in the structure and function of the aminoacyl-tRNA binding site.</text>
</comment>
<comment type="similarity">
    <text evidence="1">Belongs to the bacterial ribosomal protein bL19 family.</text>
</comment>
<proteinExistence type="inferred from homology"/>
<evidence type="ECO:0000255" key="1">
    <source>
        <dbReference type="HAMAP-Rule" id="MF_00402"/>
    </source>
</evidence>
<evidence type="ECO:0000305" key="2"/>
<feature type="chain" id="PRO_1000049632" description="Large ribosomal subunit protein bL19">
    <location>
        <begin position="1"/>
        <end position="119"/>
    </location>
</feature>
<sequence length="119" mass="13386">MHILDTVDAASLRTDVPQFRAGDTLKVHVNIIEGKNSRVQVFQGFVLGRQGDGIRETFTVRKVSFGVGVERTFPVHSPIIDKIEVVTKGDVRRAKLYYMRALRGKAAKIKEKRDFSTAK</sequence>
<accession>A0JXT8</accession>
<gene>
    <name evidence="1" type="primary">rplS</name>
    <name type="ordered locus">Arth_2479</name>
</gene>
<reference key="1">
    <citation type="journal article" date="2013" name="Stand. Genomic Sci.">
        <title>Complete genome sequence of Arthrobacter sp. strain FB24.</title>
        <authorList>
            <person name="Nakatsu C.H."/>
            <person name="Barabote R."/>
            <person name="Thompson S."/>
            <person name="Bruce D."/>
            <person name="Detter C."/>
            <person name="Brettin T."/>
            <person name="Han C."/>
            <person name="Beasley F."/>
            <person name="Chen W."/>
            <person name="Konopka A."/>
            <person name="Xie G."/>
        </authorList>
    </citation>
    <scope>NUCLEOTIDE SEQUENCE [LARGE SCALE GENOMIC DNA]</scope>
    <source>
        <strain>FB24</strain>
    </source>
</reference>
<name>RL19_ARTS2</name>
<protein>
    <recommendedName>
        <fullName evidence="1">Large ribosomal subunit protein bL19</fullName>
    </recommendedName>
    <alternativeName>
        <fullName evidence="2">50S ribosomal protein L19</fullName>
    </alternativeName>
</protein>
<dbReference type="EMBL" id="CP000454">
    <property type="protein sequence ID" value="ABK03858.1"/>
    <property type="molecule type" value="Genomic_DNA"/>
</dbReference>
<dbReference type="RefSeq" id="WP_011692321.1">
    <property type="nucleotide sequence ID" value="NC_008541.1"/>
</dbReference>
<dbReference type="SMR" id="A0JXT8"/>
<dbReference type="STRING" id="290399.Arth_2479"/>
<dbReference type="KEGG" id="art:Arth_2479"/>
<dbReference type="eggNOG" id="COG0335">
    <property type="taxonomic scope" value="Bacteria"/>
</dbReference>
<dbReference type="HOGENOM" id="CLU_103507_2_1_11"/>
<dbReference type="OrthoDB" id="9803541at2"/>
<dbReference type="Proteomes" id="UP000000754">
    <property type="component" value="Chromosome"/>
</dbReference>
<dbReference type="GO" id="GO:0022625">
    <property type="term" value="C:cytosolic large ribosomal subunit"/>
    <property type="evidence" value="ECO:0007669"/>
    <property type="project" value="TreeGrafter"/>
</dbReference>
<dbReference type="GO" id="GO:0003735">
    <property type="term" value="F:structural constituent of ribosome"/>
    <property type="evidence" value="ECO:0007669"/>
    <property type="project" value="InterPro"/>
</dbReference>
<dbReference type="GO" id="GO:0006412">
    <property type="term" value="P:translation"/>
    <property type="evidence" value="ECO:0007669"/>
    <property type="project" value="UniProtKB-UniRule"/>
</dbReference>
<dbReference type="FunFam" id="2.30.30.790:FF:000001">
    <property type="entry name" value="50S ribosomal protein L19"/>
    <property type="match status" value="1"/>
</dbReference>
<dbReference type="Gene3D" id="2.30.30.790">
    <property type="match status" value="1"/>
</dbReference>
<dbReference type="HAMAP" id="MF_00402">
    <property type="entry name" value="Ribosomal_bL19"/>
    <property type="match status" value="1"/>
</dbReference>
<dbReference type="InterPro" id="IPR001857">
    <property type="entry name" value="Ribosomal_bL19"/>
</dbReference>
<dbReference type="InterPro" id="IPR018257">
    <property type="entry name" value="Ribosomal_bL19_CS"/>
</dbReference>
<dbReference type="InterPro" id="IPR038657">
    <property type="entry name" value="Ribosomal_bL19_sf"/>
</dbReference>
<dbReference type="InterPro" id="IPR008991">
    <property type="entry name" value="Translation_prot_SH3-like_sf"/>
</dbReference>
<dbReference type="NCBIfam" id="TIGR01024">
    <property type="entry name" value="rplS_bact"/>
    <property type="match status" value="1"/>
</dbReference>
<dbReference type="PANTHER" id="PTHR15680:SF9">
    <property type="entry name" value="LARGE RIBOSOMAL SUBUNIT PROTEIN BL19M"/>
    <property type="match status" value="1"/>
</dbReference>
<dbReference type="PANTHER" id="PTHR15680">
    <property type="entry name" value="RIBOSOMAL PROTEIN L19"/>
    <property type="match status" value="1"/>
</dbReference>
<dbReference type="Pfam" id="PF01245">
    <property type="entry name" value="Ribosomal_L19"/>
    <property type="match status" value="1"/>
</dbReference>
<dbReference type="PIRSF" id="PIRSF002191">
    <property type="entry name" value="Ribosomal_L19"/>
    <property type="match status" value="1"/>
</dbReference>
<dbReference type="PRINTS" id="PR00061">
    <property type="entry name" value="RIBOSOMALL19"/>
</dbReference>
<dbReference type="SUPFAM" id="SSF50104">
    <property type="entry name" value="Translation proteins SH3-like domain"/>
    <property type="match status" value="1"/>
</dbReference>
<dbReference type="PROSITE" id="PS01015">
    <property type="entry name" value="RIBOSOMAL_L19"/>
    <property type="match status" value="1"/>
</dbReference>